<reference key="1">
    <citation type="journal article" date="1993" name="Mol. Microbiol.">
        <title>The nik operon of Escherichia coli encodes a periplasmic binding-protein-dependent transport system for nickel.</title>
        <authorList>
            <person name="Navarro C."/>
            <person name="Wu L.-F."/>
            <person name="Mandrand-Berthelot M.-A."/>
        </authorList>
    </citation>
    <scope>NUCLEOTIDE SEQUENCE [GENOMIC DNA]</scope>
    <source>
        <strain>K12</strain>
    </source>
</reference>
<reference key="2">
    <citation type="journal article" date="1994" name="Nucleic Acids Res.">
        <title>Analysis of the Escherichia coli genome. V. DNA sequence of the region from 76.0 to 81.5 minutes.</title>
        <authorList>
            <person name="Sofia H.J."/>
            <person name="Burland V."/>
            <person name="Daniels D.L."/>
            <person name="Plunkett G. III"/>
            <person name="Blattner F.R."/>
        </authorList>
    </citation>
    <scope>NUCLEOTIDE SEQUENCE [LARGE SCALE GENOMIC DNA]</scope>
    <source>
        <strain>K12 / MG1655 / ATCC 47076</strain>
    </source>
</reference>
<reference key="3">
    <citation type="journal article" date="1997" name="Science">
        <title>The complete genome sequence of Escherichia coli K-12.</title>
        <authorList>
            <person name="Blattner F.R."/>
            <person name="Plunkett G. III"/>
            <person name="Bloch C.A."/>
            <person name="Perna N.T."/>
            <person name="Burland V."/>
            <person name="Riley M."/>
            <person name="Collado-Vides J."/>
            <person name="Glasner J.D."/>
            <person name="Rode C.K."/>
            <person name="Mayhew G.F."/>
            <person name="Gregor J."/>
            <person name="Davis N.W."/>
            <person name="Kirkpatrick H.A."/>
            <person name="Goeden M.A."/>
            <person name="Rose D.J."/>
            <person name="Mau B."/>
            <person name="Shao Y."/>
        </authorList>
    </citation>
    <scope>NUCLEOTIDE SEQUENCE [LARGE SCALE GENOMIC DNA]</scope>
    <source>
        <strain>K12 / MG1655 / ATCC 47076</strain>
    </source>
</reference>
<reference key="4">
    <citation type="journal article" date="2006" name="Mol. Syst. Biol.">
        <title>Highly accurate genome sequences of Escherichia coli K-12 strains MG1655 and W3110.</title>
        <authorList>
            <person name="Hayashi K."/>
            <person name="Morooka N."/>
            <person name="Yamamoto Y."/>
            <person name="Fujita K."/>
            <person name="Isono K."/>
            <person name="Choi S."/>
            <person name="Ohtsubo E."/>
            <person name="Baba T."/>
            <person name="Wanner B.L."/>
            <person name="Mori H."/>
            <person name="Horiuchi T."/>
        </authorList>
    </citation>
    <scope>NUCLEOTIDE SEQUENCE [LARGE SCALE GENOMIC DNA]</scope>
    <source>
        <strain>K12 / W3110 / ATCC 27325 / DSM 5911</strain>
    </source>
</reference>
<feature type="chain" id="PRO_0000092620" description="Nickel import ATP-binding protein NikD">
    <location>
        <begin position="1"/>
        <end position="254"/>
    </location>
</feature>
<feature type="domain" description="ABC transporter" evidence="1">
    <location>
        <begin position="2"/>
        <end position="241"/>
    </location>
</feature>
<feature type="binding site" evidence="1">
    <location>
        <begin position="36"/>
        <end position="43"/>
    </location>
    <ligand>
        <name>ATP</name>
        <dbReference type="ChEBI" id="CHEBI:30616"/>
    </ligand>
</feature>
<feature type="sequence conflict" description="In Ref. 1; CAA51662." evidence="2" ref="1">
    <original>ARILDLLESIMQKQAPGMLLVT</original>
    <variation>GGASSICWKHYAKQCGNAAGD</variation>
    <location>
        <begin position="177"/>
        <end position="198"/>
    </location>
</feature>
<feature type="sequence conflict" description="In Ref. 1; CAA51662." evidence="2" ref="1">
    <original>S</original>
    <variation>T</variation>
    <location>
        <position position="239"/>
    </location>
</feature>
<feature type="sequence conflict" description="In Ref. 1; CAA51662." evidence="2" ref="1">
    <original>E</original>
    <variation>D</variation>
    <location>
        <position position="251"/>
    </location>
</feature>
<gene>
    <name evidence="1" type="primary">nikD</name>
    <name type="ordered locus">b3479</name>
    <name type="ordered locus">JW3444</name>
</gene>
<sequence>MPQQIELRNIALQAAQPLVHGVSLTLQRGRVLALVGGSGSGKSLTCAATLGILPAGVRQTAGEILADGKPVSPCALRGIKIATIMQNPRSAFNPLHTMHTHARETCLALGKPADDATLTAAIEAVGLENAARVLKLYPFEMSGGMLQRMMIAMAVLCESPFIIADEPTTDLDVVAQARILDLLESIMQKQAPGMLLVTHDMGVVARLADDVAVMSDGKIVEQGDVETLFNAPKHTVTRSLVSAHLALYGMELAS</sequence>
<keyword id="KW-0067">ATP-binding</keyword>
<keyword id="KW-0997">Cell inner membrane</keyword>
<keyword id="KW-1003">Cell membrane</keyword>
<keyword id="KW-0406">Ion transport</keyword>
<keyword id="KW-0472">Membrane</keyword>
<keyword id="KW-0533">Nickel</keyword>
<keyword id="KW-0921">Nickel transport</keyword>
<keyword id="KW-0547">Nucleotide-binding</keyword>
<keyword id="KW-1185">Reference proteome</keyword>
<keyword id="KW-1278">Translocase</keyword>
<keyword id="KW-0813">Transport</keyword>
<protein>
    <recommendedName>
        <fullName evidence="1">Nickel import ATP-binding protein NikD</fullName>
        <ecNumber evidence="1">7.2.2.11</ecNumber>
    </recommendedName>
</protein>
<dbReference type="EC" id="7.2.2.11" evidence="1"/>
<dbReference type="EMBL" id="X73143">
    <property type="protein sequence ID" value="CAA51662.1"/>
    <property type="molecule type" value="Genomic_DNA"/>
</dbReference>
<dbReference type="EMBL" id="U00039">
    <property type="protein sequence ID" value="AAB18454.1"/>
    <property type="molecule type" value="Genomic_DNA"/>
</dbReference>
<dbReference type="EMBL" id="U00096">
    <property type="protein sequence ID" value="AAC76504.1"/>
    <property type="molecule type" value="Genomic_DNA"/>
</dbReference>
<dbReference type="EMBL" id="AP009048">
    <property type="protein sequence ID" value="BAE77814.1"/>
    <property type="molecule type" value="Genomic_DNA"/>
</dbReference>
<dbReference type="PIR" id="S47698">
    <property type="entry name" value="S47698"/>
</dbReference>
<dbReference type="RefSeq" id="NP_417936.1">
    <property type="nucleotide sequence ID" value="NC_000913.3"/>
</dbReference>
<dbReference type="RefSeq" id="WP_001136229.1">
    <property type="nucleotide sequence ID" value="NZ_SSZK01000008.1"/>
</dbReference>
<dbReference type="SMR" id="P33593"/>
<dbReference type="BioGRID" id="4262507">
    <property type="interactions" value="20"/>
</dbReference>
<dbReference type="BioGRID" id="852298">
    <property type="interactions" value="3"/>
</dbReference>
<dbReference type="ComplexPortal" id="CPX-4348">
    <property type="entry name" value="Nickel ABC transporter complex"/>
</dbReference>
<dbReference type="DIP" id="DIP-10343N"/>
<dbReference type="FunCoup" id="P33593">
    <property type="interactions" value="241"/>
</dbReference>
<dbReference type="IntAct" id="P33593">
    <property type="interactions" value="11"/>
</dbReference>
<dbReference type="STRING" id="511145.b3479"/>
<dbReference type="TCDB" id="3.A.1.5.3">
    <property type="family name" value="the atp-binding cassette (abc) superfamily"/>
</dbReference>
<dbReference type="jPOST" id="P33593"/>
<dbReference type="PaxDb" id="511145-b3479"/>
<dbReference type="EnsemblBacteria" id="AAC76504">
    <property type="protein sequence ID" value="AAC76504"/>
    <property type="gene ID" value="b3479"/>
</dbReference>
<dbReference type="GeneID" id="947989"/>
<dbReference type="KEGG" id="ecj:JW3444"/>
<dbReference type="KEGG" id="eco:b3479"/>
<dbReference type="KEGG" id="ecoc:C3026_18840"/>
<dbReference type="PATRIC" id="fig|1411691.4.peg.3246"/>
<dbReference type="EchoBASE" id="EB2003"/>
<dbReference type="eggNOG" id="COG0444">
    <property type="taxonomic scope" value="Bacteria"/>
</dbReference>
<dbReference type="HOGENOM" id="CLU_000604_1_23_6"/>
<dbReference type="InParanoid" id="P33593"/>
<dbReference type="OMA" id="CCTAIVG"/>
<dbReference type="OrthoDB" id="6849577at2"/>
<dbReference type="PhylomeDB" id="P33593"/>
<dbReference type="BioCyc" id="EcoCyc:NIKD-MONOMER"/>
<dbReference type="BioCyc" id="MetaCyc:NIKD-MONOMER"/>
<dbReference type="PRO" id="PR:P33593"/>
<dbReference type="Proteomes" id="UP000000625">
    <property type="component" value="Chromosome"/>
</dbReference>
<dbReference type="GO" id="GO:0055052">
    <property type="term" value="C:ATP-binding cassette (ABC) transporter complex, substrate-binding subunit-containing"/>
    <property type="evidence" value="ECO:0000303"/>
    <property type="project" value="ComplexPortal"/>
</dbReference>
<dbReference type="GO" id="GO:0016020">
    <property type="term" value="C:membrane"/>
    <property type="evidence" value="ECO:0000303"/>
    <property type="project" value="ComplexPortal"/>
</dbReference>
<dbReference type="GO" id="GO:0005886">
    <property type="term" value="C:plasma membrane"/>
    <property type="evidence" value="ECO:0000318"/>
    <property type="project" value="GO_Central"/>
</dbReference>
<dbReference type="GO" id="GO:0015413">
    <property type="term" value="F:ABC-type nickel transporter activity"/>
    <property type="evidence" value="ECO:0007669"/>
    <property type="project" value="UniProtKB-EC"/>
</dbReference>
<dbReference type="GO" id="GO:0005524">
    <property type="term" value="F:ATP binding"/>
    <property type="evidence" value="ECO:0000255"/>
    <property type="project" value="EcoCyc"/>
</dbReference>
<dbReference type="GO" id="GO:0016887">
    <property type="term" value="F:ATP hydrolysis activity"/>
    <property type="evidence" value="ECO:0007669"/>
    <property type="project" value="InterPro"/>
</dbReference>
<dbReference type="GO" id="GO:0016151">
    <property type="term" value="F:nickel cation binding"/>
    <property type="evidence" value="ECO:0007669"/>
    <property type="project" value="InterPro"/>
</dbReference>
<dbReference type="GO" id="GO:0022857">
    <property type="term" value="F:transmembrane transporter activity"/>
    <property type="evidence" value="ECO:0000318"/>
    <property type="project" value="GO_Central"/>
</dbReference>
<dbReference type="GO" id="GO:0098716">
    <property type="term" value="P:nickel cation import across plasma membrane"/>
    <property type="evidence" value="ECO:0000315"/>
    <property type="project" value="EcoCyc"/>
</dbReference>
<dbReference type="GO" id="GO:0035672">
    <property type="term" value="P:oligopeptide transmembrane transport"/>
    <property type="evidence" value="ECO:0000318"/>
    <property type="project" value="GO_Central"/>
</dbReference>
<dbReference type="CDD" id="cd03257">
    <property type="entry name" value="ABC_NikE_OppD_transporters"/>
    <property type="match status" value="1"/>
</dbReference>
<dbReference type="FunFam" id="3.40.50.300:FF:000858">
    <property type="entry name" value="Nickel import ATP-binding protein NikD"/>
    <property type="match status" value="1"/>
</dbReference>
<dbReference type="Gene3D" id="3.40.50.300">
    <property type="entry name" value="P-loop containing nucleotide triphosphate hydrolases"/>
    <property type="match status" value="1"/>
</dbReference>
<dbReference type="InterPro" id="IPR003593">
    <property type="entry name" value="AAA+_ATPase"/>
</dbReference>
<dbReference type="InterPro" id="IPR050388">
    <property type="entry name" value="ABC_Ni/Peptide_Import"/>
</dbReference>
<dbReference type="InterPro" id="IPR003439">
    <property type="entry name" value="ABC_transporter-like_ATP-bd"/>
</dbReference>
<dbReference type="InterPro" id="IPR017871">
    <property type="entry name" value="ABC_transporter-like_CS"/>
</dbReference>
<dbReference type="InterPro" id="IPR014138">
    <property type="entry name" value="Nickel_NikD"/>
</dbReference>
<dbReference type="InterPro" id="IPR027417">
    <property type="entry name" value="P-loop_NTPase"/>
</dbReference>
<dbReference type="NCBIfam" id="TIGR02770">
    <property type="entry name" value="nickel_nikD"/>
    <property type="match status" value="1"/>
</dbReference>
<dbReference type="PANTHER" id="PTHR43297:SF2">
    <property type="entry name" value="DIPEPTIDE TRANSPORT ATP-BINDING PROTEIN DPPD"/>
    <property type="match status" value="1"/>
</dbReference>
<dbReference type="PANTHER" id="PTHR43297">
    <property type="entry name" value="OLIGOPEPTIDE TRANSPORT ATP-BINDING PROTEIN APPD"/>
    <property type="match status" value="1"/>
</dbReference>
<dbReference type="Pfam" id="PF00005">
    <property type="entry name" value="ABC_tran"/>
    <property type="match status" value="1"/>
</dbReference>
<dbReference type="SMART" id="SM00382">
    <property type="entry name" value="AAA"/>
    <property type="match status" value="1"/>
</dbReference>
<dbReference type="SUPFAM" id="SSF52540">
    <property type="entry name" value="P-loop containing nucleoside triphosphate hydrolases"/>
    <property type="match status" value="1"/>
</dbReference>
<dbReference type="PROSITE" id="PS00211">
    <property type="entry name" value="ABC_TRANSPORTER_1"/>
    <property type="match status" value="1"/>
</dbReference>
<dbReference type="PROSITE" id="PS50893">
    <property type="entry name" value="ABC_TRANSPORTER_2"/>
    <property type="match status" value="1"/>
</dbReference>
<dbReference type="PROSITE" id="PS51247">
    <property type="entry name" value="NIKD"/>
    <property type="match status" value="1"/>
</dbReference>
<proteinExistence type="inferred from homology"/>
<accession>P33593</accession>
<accession>Q2M7E2</accession>
<comment type="function">
    <text evidence="1">Part of the ABC transporter complex NikABCDE involved in nickel import. Responsible for energy coupling to the transport system.</text>
</comment>
<comment type="catalytic activity">
    <reaction evidence="1">
        <text>Ni(2+)(out) + ATP + H2O = Ni(2+)(in) + ADP + phosphate + H(+)</text>
        <dbReference type="Rhea" id="RHEA:15557"/>
        <dbReference type="ChEBI" id="CHEBI:15377"/>
        <dbReference type="ChEBI" id="CHEBI:15378"/>
        <dbReference type="ChEBI" id="CHEBI:30616"/>
        <dbReference type="ChEBI" id="CHEBI:43474"/>
        <dbReference type="ChEBI" id="CHEBI:49786"/>
        <dbReference type="ChEBI" id="CHEBI:456216"/>
        <dbReference type="EC" id="7.2.2.11"/>
    </reaction>
</comment>
<comment type="subunit">
    <text evidence="1">The complex is composed of two ATP-binding proteins (NikD and NikE), two transmembrane proteins (NikB and NikC) and a solute-binding protein (NikA).</text>
</comment>
<comment type="subcellular location">
    <subcellularLocation>
        <location evidence="1">Cell inner membrane</location>
        <topology evidence="1">Peripheral membrane protein</topology>
    </subcellularLocation>
</comment>
<comment type="similarity">
    <text evidence="1">Belongs to the ABC transporter superfamily. Nickel importer (TC 3.A.1.5.3) family.</text>
</comment>
<organism>
    <name type="scientific">Escherichia coli (strain K12)</name>
    <dbReference type="NCBI Taxonomy" id="83333"/>
    <lineage>
        <taxon>Bacteria</taxon>
        <taxon>Pseudomonadati</taxon>
        <taxon>Pseudomonadota</taxon>
        <taxon>Gammaproteobacteria</taxon>
        <taxon>Enterobacterales</taxon>
        <taxon>Enterobacteriaceae</taxon>
        <taxon>Escherichia</taxon>
    </lineage>
</organism>
<evidence type="ECO:0000255" key="1">
    <source>
        <dbReference type="HAMAP-Rule" id="MF_01711"/>
    </source>
</evidence>
<evidence type="ECO:0000305" key="2"/>
<name>NIKD_ECOLI</name>